<name>TRM3_EHV1V</name>
<organismHost>
    <name type="scientific">Equus caballus</name>
    <name type="common">Horse</name>
    <dbReference type="NCBI Taxonomy" id="9796"/>
</organismHost>
<proteinExistence type="inferred from homology"/>
<sequence>MFGRVLGRETVQYFEALRREVQARRGAKNRAAEAQNGGEDDAKTAFLNFAIPTPQRHQTVVPGVGTLHDCCETAQIFASVARRLLFRSLSKWQSGEARERLDPASVEAYVDPKVRQALKTISFVEYSDDEARSCRNAYYSIMNTFDALRSSDAFHQVASFVARFSRLVDTSFNGADLDGDGQQASKRARVDVPTYGKQRGTLELFQKMILMHATYFIAAVILGDHADRIGAFLKMVFNTPEFSDATIRHFRQRATVFLVPRRHGKTWFLVPLIALALATFKGIKIGYTAHIRKATEPVFDEIGARLRQWFGNSPVDHVKGENISFSFPDGSKSTIVFASSHNTNGIRGQDFNLLFVDEANFIRPEAVQTIIGFLNQTNCKIIFVSSTNTGKASTSFLYNLKGAADDLLNVVTYICDEHMERVKAHTNATACSCYILNKPVFITMDGAMRNTAELFLPDSFMQEIIGGGNVSGAHRDEPVFTKTAQDRFLLYRPSTVANQDIMSSDLYVYVDPAFTTNAMASGTGVAVVGRYRSNWVVFGMEHFFLSALTGSSAELIARCVAQCLAQVFAIHKRPFDSVRVAVEGNSSQDAAVAIATNIQLELNTLRRADVVPMPGAVLFYHCTPHGSSVAYPFFLLQKQKTGAFDHFIKAFNSGSVLASQELVSNTVRLQTDPVEYLLTQMKNLTEVVTGTSETRVFTGKRNGASDDMLVALVMAVYLSSLPPTSDAFSSLPAQ</sequence>
<evidence type="ECO:0000255" key="1">
    <source>
        <dbReference type="HAMAP-Rule" id="MF_04013"/>
    </source>
</evidence>
<evidence type="ECO:0000312" key="2">
    <source>
        <dbReference type="EMBL" id="AAS45929.1"/>
    </source>
</evidence>
<gene>
    <name evidence="1" type="primary">TRM3</name>
    <name type="ordered locus">44</name>
</gene>
<dbReference type="EC" id="3.1.-.-" evidence="1"/>
<dbReference type="EMBL" id="AY464052">
    <property type="protein sequence ID" value="AAS45929.1"/>
    <property type="molecule type" value="Genomic_DNA"/>
</dbReference>
<dbReference type="SMR" id="P84396"/>
<dbReference type="KEGG" id="vg:1487536"/>
<dbReference type="Proteomes" id="UP000008296">
    <property type="component" value="Segment"/>
</dbReference>
<dbReference type="GO" id="GO:0042025">
    <property type="term" value="C:host cell nucleus"/>
    <property type="evidence" value="ECO:0007669"/>
    <property type="project" value="UniProtKB-SubCell"/>
</dbReference>
<dbReference type="GO" id="GO:0003677">
    <property type="term" value="F:DNA binding"/>
    <property type="evidence" value="ECO:0007669"/>
    <property type="project" value="UniProtKB-KW"/>
</dbReference>
<dbReference type="GO" id="GO:0016787">
    <property type="term" value="F:hydrolase activity"/>
    <property type="evidence" value="ECO:0007669"/>
    <property type="project" value="UniProtKB-KW"/>
</dbReference>
<dbReference type="GO" id="GO:0051276">
    <property type="term" value="P:chromosome organization"/>
    <property type="evidence" value="ECO:0007669"/>
    <property type="project" value="InterPro"/>
</dbReference>
<dbReference type="Gene3D" id="3.30.420.320">
    <property type="match status" value="1"/>
</dbReference>
<dbReference type="Gene3D" id="3.40.50.300">
    <property type="entry name" value="P-loop containing nucleotide triphosphate hydrolases"/>
    <property type="match status" value="1"/>
</dbReference>
<dbReference type="HAMAP" id="MF_04013">
    <property type="entry name" value="HSV_TRM3"/>
    <property type="match status" value="1"/>
</dbReference>
<dbReference type="InterPro" id="IPR003498">
    <property type="entry name" value="DNA_pack_C"/>
</dbReference>
<dbReference type="InterPro" id="IPR038435">
    <property type="entry name" value="DNA_pack_C_sf"/>
</dbReference>
<dbReference type="InterPro" id="IPR003499">
    <property type="entry name" value="DNA_pack_N"/>
</dbReference>
<dbReference type="InterPro" id="IPR033663">
    <property type="entry name" value="HSV_TRM3"/>
</dbReference>
<dbReference type="InterPro" id="IPR027417">
    <property type="entry name" value="P-loop_NTPase"/>
</dbReference>
<dbReference type="Pfam" id="PF02499">
    <property type="entry name" value="DNA_pack_C"/>
    <property type="match status" value="1"/>
</dbReference>
<dbReference type="Pfam" id="PF02500">
    <property type="entry name" value="DNA_pack_N"/>
    <property type="match status" value="1"/>
</dbReference>
<dbReference type="SUPFAM" id="SSF52540">
    <property type="entry name" value="P-loop containing nucleoside triphosphate hydrolases"/>
    <property type="match status" value="1"/>
</dbReference>
<organism>
    <name type="scientific">Equine herpesvirus 1 (strain V592)</name>
    <name type="common">EHV-1</name>
    <name type="synonym">Equine abortion virus</name>
    <dbReference type="NCBI Taxonomy" id="310273"/>
    <lineage>
        <taxon>Viruses</taxon>
        <taxon>Duplodnaviria</taxon>
        <taxon>Heunggongvirae</taxon>
        <taxon>Peploviricota</taxon>
        <taxon>Herviviricetes</taxon>
        <taxon>Herpesvirales</taxon>
        <taxon>Orthoherpesviridae</taxon>
        <taxon>Alphaherpesvirinae</taxon>
        <taxon>Varicellovirus</taxon>
        <taxon>Varicellovirus equidalpha1</taxon>
        <taxon>Equid alphaherpesvirus 1</taxon>
    </lineage>
</organism>
<feature type="chain" id="PRO_0000115944" description="Tripartite terminase subunit 3">
    <location>
        <begin position="1"/>
        <end position="734"/>
    </location>
</feature>
<feature type="short sequence motif" description="Nuclear localization signal" evidence="1">
    <location>
        <begin position="184"/>
        <end position="190"/>
    </location>
</feature>
<feature type="short sequence motif" description="Walker A motif" evidence="1">
    <location>
        <begin position="259"/>
        <end position="266"/>
    </location>
</feature>
<feature type="short sequence motif" description="Walker B motif" evidence="1">
    <location>
        <begin position="353"/>
        <end position="358"/>
    </location>
</feature>
<feature type="active site" description="For ATPase activity" evidence="1">
    <location>
        <position position="358"/>
    </location>
</feature>
<feature type="active site" description="For nuclease activity" evidence="1">
    <location>
        <position position="511"/>
    </location>
</feature>
<feature type="active site" description="For nuclease activity" evidence="1">
    <location>
        <position position="583"/>
    </location>
</feature>
<feature type="active site" description="For nuclease activity" evidence="1">
    <location>
        <position position="707"/>
    </location>
</feature>
<keyword id="KW-0238">DNA-binding</keyword>
<keyword id="KW-1048">Host nucleus</keyword>
<keyword id="KW-0378">Hydrolase</keyword>
<keyword id="KW-0231">Viral genome packaging</keyword>
<keyword id="KW-1188">Viral release from host cell</keyword>
<reference evidence="2" key="1">
    <citation type="submission" date="2003-11" db="EMBL/GenBank/DDBJ databases">
        <authorList>
            <person name="Davis-Poynter N."/>
            <person name="Nugent J."/>
            <person name="Birch-Machin I."/>
            <person name="Allen G.P."/>
        </authorList>
    </citation>
    <scope>NUCLEOTIDE SEQUENCE [LARGE SCALE GENOMIC DNA]</scope>
</reference>
<protein>
    <recommendedName>
        <fullName evidence="1">Tripartite terminase subunit 3</fullName>
        <ecNumber evidence="1">3.1.-.-</ecNumber>
    </recommendedName>
    <alternativeName>
        <fullName evidence="1">Terminase large subunit</fullName>
    </alternativeName>
</protein>
<accession>P84396</accession>
<accession>Q6S6S7</accession>
<comment type="function">
    <text evidence="1">Component of the molecular motor that translocates viral genomic DNA in empty capsid during DNA packaging. Forms a tripartite terminase complex together with TRM1 and TRM2 in the host cytoplasm. Once the complex reaches the host nucleus, it interacts with the capsid portal vertex. This portal forms a ring in which genomic DNA is translocated into the capsid. TRM3 carries an RNase H-like nuclease activity that plays an important role for the cleavage of concatemeric viral DNA into unit length genomes.</text>
</comment>
<comment type="subunit">
    <text evidence="1">Interacts with the terminase subunits TRM1 and TRM2. Interacts with portal protein.</text>
</comment>
<comment type="subcellular location">
    <subcellularLocation>
        <location evidence="1">Host nucleus</location>
    </subcellularLocation>
    <text evidence="1">Responsible for the nuclear localization of the two others subunits TRM1 and TRM2.</text>
</comment>
<comment type="similarity">
    <text evidence="1">Belongs to the herpesviridae TRM3 protein family.</text>
</comment>